<accession>Q86WK7</accession>
<accession>Q494V6</accession>
<accession>Q96JH6</accession>
<comment type="function">
    <text evidence="2">May mediate heterophilic cell-cell interaction. May contribute to signal transduction through its intracellular domain (By similarity).</text>
</comment>
<comment type="subunit">
    <text evidence="1">Binds AMIGO1 or AMIGO2.</text>
</comment>
<comment type="subcellular location">
    <subcellularLocation>
        <location evidence="8">Membrane</location>
        <topology evidence="8">Single-pass type I membrane protein</topology>
    </subcellularLocation>
</comment>
<comment type="similarity">
    <text evidence="8">Belongs to the immunoglobulin superfamily. AMIGO family.</text>
</comment>
<comment type="sequence caution" evidence="8">
    <conflict type="erroneous initiation">
        <sequence resource="EMBL-CDS" id="BAB47480"/>
    </conflict>
</comment>
<name>AMGO3_HUMAN</name>
<reference evidence="9" key="1">
    <citation type="journal article" date="2003" name="J. Cell Biol.">
        <title>AMIGO, a transmembrane protein implicated in axon tract development, defines a novel protein family with leucine-rich repeats.</title>
        <authorList>
            <person name="Kuja-Panula J."/>
            <person name="Kiiltomaeki M."/>
            <person name="Yamashiro T."/>
            <person name="Rouhiainen A."/>
            <person name="Rauvala H."/>
        </authorList>
    </citation>
    <scope>NUCLEOTIDE SEQUENCE [MRNA]</scope>
    <source>
        <tissue evidence="7">Embryonic kidney</tissue>
    </source>
</reference>
<reference evidence="11" key="2">
    <citation type="journal article" date="2001" name="DNA Res.">
        <title>Prediction of the coding sequences of unidentified human genes. XX. The complete sequences of 100 new cDNA clones from brain which code for large proteins in vitro.</title>
        <authorList>
            <person name="Nagase T."/>
            <person name="Nakayama M."/>
            <person name="Nakajima D."/>
            <person name="Kikuno R."/>
            <person name="Ohara O."/>
        </authorList>
    </citation>
    <scope>NUCLEOTIDE SEQUENCE [LARGE SCALE MRNA]</scope>
    <source>
        <tissue evidence="11">Brain</tissue>
    </source>
</reference>
<reference evidence="10" key="3">
    <citation type="journal article" date="2003" name="Genome Res.">
        <title>The secreted protein discovery initiative (SPDI), a large-scale effort to identify novel human secreted and transmembrane proteins: a bioinformatics assessment.</title>
        <authorList>
            <person name="Clark H.F."/>
            <person name="Gurney A.L."/>
            <person name="Abaya E."/>
            <person name="Baker K."/>
            <person name="Baldwin D.T."/>
            <person name="Brush J."/>
            <person name="Chen J."/>
            <person name="Chow B."/>
            <person name="Chui C."/>
            <person name="Crowley C."/>
            <person name="Currell B."/>
            <person name="Deuel B."/>
            <person name="Dowd P."/>
            <person name="Eaton D."/>
            <person name="Foster J.S."/>
            <person name="Grimaldi C."/>
            <person name="Gu Q."/>
            <person name="Hass P.E."/>
            <person name="Heldens S."/>
            <person name="Huang A."/>
            <person name="Kim H.S."/>
            <person name="Klimowski L."/>
            <person name="Jin Y."/>
            <person name="Johnson S."/>
            <person name="Lee J."/>
            <person name="Lewis L."/>
            <person name="Liao D."/>
            <person name="Mark M.R."/>
            <person name="Robbie E."/>
            <person name="Sanchez C."/>
            <person name="Schoenfeld J."/>
            <person name="Seshagiri S."/>
            <person name="Simmons L."/>
            <person name="Singh J."/>
            <person name="Smith V."/>
            <person name="Stinson J."/>
            <person name="Vagts A."/>
            <person name="Vandlen R.L."/>
            <person name="Watanabe C."/>
            <person name="Wieand D."/>
            <person name="Woods K."/>
            <person name="Xie M.-H."/>
            <person name="Yansura D.G."/>
            <person name="Yi S."/>
            <person name="Yu G."/>
            <person name="Yuan J."/>
            <person name="Zhang M."/>
            <person name="Zhang Z."/>
            <person name="Goddard A.D."/>
            <person name="Wood W.I."/>
            <person name="Godowski P.J."/>
            <person name="Gray A.M."/>
        </authorList>
    </citation>
    <scope>NUCLEOTIDE SEQUENCE [LARGE SCALE MRNA]</scope>
</reference>
<reference key="4">
    <citation type="journal article" date="2004" name="Genome Res.">
        <title>The status, quality, and expansion of the NIH full-length cDNA project: the Mammalian Gene Collection (MGC).</title>
        <authorList>
            <consortium name="The MGC Project Team"/>
        </authorList>
    </citation>
    <scope>NUCLEOTIDE SEQUENCE [LARGE SCALE MRNA]</scope>
</reference>
<keyword id="KW-0130">Cell adhesion</keyword>
<keyword id="KW-1015">Disulfide bond</keyword>
<keyword id="KW-0325">Glycoprotein</keyword>
<keyword id="KW-0393">Immunoglobulin domain</keyword>
<keyword id="KW-0433">Leucine-rich repeat</keyword>
<keyword id="KW-0472">Membrane</keyword>
<keyword id="KW-1267">Proteomics identification</keyword>
<keyword id="KW-1185">Reference proteome</keyword>
<keyword id="KW-0677">Repeat</keyword>
<keyword id="KW-0732">Signal</keyword>
<keyword id="KW-0812">Transmembrane</keyword>
<keyword id="KW-1133">Transmembrane helix</keyword>
<organism>
    <name type="scientific">Homo sapiens</name>
    <name type="common">Human</name>
    <dbReference type="NCBI Taxonomy" id="9606"/>
    <lineage>
        <taxon>Eukaryota</taxon>
        <taxon>Metazoa</taxon>
        <taxon>Chordata</taxon>
        <taxon>Craniata</taxon>
        <taxon>Vertebrata</taxon>
        <taxon>Euteleostomi</taxon>
        <taxon>Mammalia</taxon>
        <taxon>Eutheria</taxon>
        <taxon>Euarchontoglires</taxon>
        <taxon>Primates</taxon>
        <taxon>Haplorrhini</taxon>
        <taxon>Catarrhini</taxon>
        <taxon>Hominidae</taxon>
        <taxon>Homo</taxon>
    </lineage>
</organism>
<proteinExistence type="evidence at protein level"/>
<sequence length="504" mass="55250">MTWLVLLGTLLCMLRVGLGTPDSEGFPPRALHNCPYKCICAADLLSCTGLGLQDVPAELPAATADLDLSHNALQRLRPGWLAPLFQLRALHLDHNELDALGRGVFVNASGLRLLDLSSNTLRALGRHDLDGLGALEKLLLFNNRLVHLDEHAFHGLRALSHLYLGCNELASFSFDHLHGLSATHLLTLDLSSNRLGHISVPELAALPAFLKNGLYLHNNPLPCDCRLYHLLQRWHQRGLSAVRDFAREYVCLAFKVPASRVRFFQHSRVFENCSSAPALGLERPEEHLYALVGRSLRLYCNTSVPAMRIAWVSPQQELLRAPGSRDGSIAVLADGSLAIGNVQEQHAGLFVCLATGPRLHHNQTHEYNVSVHFPRPEPEAFNTGFTTLLGCAVGLVLVLLYLFAPPCRCCRRACRCRRWPQTPSPLQELSAQSSVLSTTPPDAPSRKASVHKHVVFLEPGRRGLNGRVQLAVAEEFDLYNPGGLQLKAGSESASSIGSEGPMTT</sequence>
<gene>
    <name evidence="9" type="primary">AMIGO3</name>
    <name evidence="3" type="synonym">ALI3</name>
    <name evidence="11" type="synonym">KIAA1851</name>
    <name type="ORF">UNQ6084/PRO20089</name>
</gene>
<protein>
    <recommendedName>
        <fullName>Amphoterin-induced protein 3</fullName>
    </recommendedName>
    <alternativeName>
        <fullName>AMIGO-3</fullName>
    </alternativeName>
    <alternativeName>
        <fullName>Alivin-3</fullName>
    </alternativeName>
</protein>
<dbReference type="EMBL" id="AY237003">
    <property type="protein sequence ID" value="AAO48944.1"/>
    <property type="molecule type" value="mRNA"/>
</dbReference>
<dbReference type="EMBL" id="AB058754">
    <property type="protein sequence ID" value="BAB47480.1"/>
    <property type="status" value="ALT_INIT"/>
    <property type="molecule type" value="mRNA"/>
</dbReference>
<dbReference type="EMBL" id="AY358134">
    <property type="protein sequence ID" value="AAQ88501.1"/>
    <property type="molecule type" value="mRNA"/>
</dbReference>
<dbReference type="EMBL" id="BC101363">
    <property type="protein sequence ID" value="AAI01364.1"/>
    <property type="molecule type" value="mRNA"/>
</dbReference>
<dbReference type="EMBL" id="BC101364">
    <property type="protein sequence ID" value="AAI01365.1"/>
    <property type="molecule type" value="mRNA"/>
</dbReference>
<dbReference type="CCDS" id="CCDS33759.1"/>
<dbReference type="RefSeq" id="NP_942015.1">
    <property type="nucleotide sequence ID" value="NM_198722.3"/>
</dbReference>
<dbReference type="SMR" id="Q86WK7"/>
<dbReference type="BioGRID" id="132150">
    <property type="interactions" value="37"/>
</dbReference>
<dbReference type="FunCoup" id="Q86WK7">
    <property type="interactions" value="68"/>
</dbReference>
<dbReference type="IntAct" id="Q86WK7">
    <property type="interactions" value="16"/>
</dbReference>
<dbReference type="STRING" id="9606.ENSP00000323096"/>
<dbReference type="GlyCosmos" id="Q86WK7">
    <property type="glycosylation" value="5 sites, No reported glycans"/>
</dbReference>
<dbReference type="GlyGen" id="Q86WK7">
    <property type="glycosylation" value="6 sites, 1 N-linked glycan (2 sites), 1 O-linked glycan (1 site)"/>
</dbReference>
<dbReference type="iPTMnet" id="Q86WK7"/>
<dbReference type="PhosphoSitePlus" id="Q86WK7"/>
<dbReference type="BioMuta" id="AMIGO3"/>
<dbReference type="DMDM" id="68052343"/>
<dbReference type="jPOST" id="Q86WK7"/>
<dbReference type="MassIVE" id="Q86WK7"/>
<dbReference type="PaxDb" id="9606-ENSP00000323096"/>
<dbReference type="PeptideAtlas" id="Q86WK7"/>
<dbReference type="ProteomicsDB" id="70179"/>
<dbReference type="Antibodypedia" id="13729">
    <property type="antibodies" value="139 antibodies from 22 providers"/>
</dbReference>
<dbReference type="DNASU" id="386724"/>
<dbReference type="Ensembl" id="ENST00000320431.8">
    <property type="protein sequence ID" value="ENSP00000323096.7"/>
    <property type="gene ID" value="ENSG00000176020.9"/>
</dbReference>
<dbReference type="GeneID" id="386724"/>
<dbReference type="KEGG" id="hsa:386724"/>
<dbReference type="MANE-Select" id="ENST00000320431.8">
    <property type="protein sequence ID" value="ENSP00000323096.7"/>
    <property type="RefSeq nucleotide sequence ID" value="NM_198722.3"/>
    <property type="RefSeq protein sequence ID" value="NP_942015.1"/>
</dbReference>
<dbReference type="UCSC" id="uc003cxj.4">
    <property type="organism name" value="human"/>
</dbReference>
<dbReference type="AGR" id="HGNC:24075"/>
<dbReference type="CTD" id="386724"/>
<dbReference type="DisGeNET" id="386724"/>
<dbReference type="GeneCards" id="AMIGO3"/>
<dbReference type="HGNC" id="HGNC:24075">
    <property type="gene designation" value="AMIGO3"/>
</dbReference>
<dbReference type="HPA" id="ENSG00000176020">
    <property type="expression patterns" value="Low tissue specificity"/>
</dbReference>
<dbReference type="MIM" id="615691">
    <property type="type" value="gene"/>
</dbReference>
<dbReference type="neXtProt" id="NX_Q86WK7"/>
<dbReference type="PharmGKB" id="PA142672627"/>
<dbReference type="VEuPathDB" id="HostDB:ENSG00000176020"/>
<dbReference type="eggNOG" id="ENOG502QUWU">
    <property type="taxonomic scope" value="Eukaryota"/>
</dbReference>
<dbReference type="GeneTree" id="ENSGT00950000183146"/>
<dbReference type="HOGENOM" id="CLU_030478_0_0_1"/>
<dbReference type="InParanoid" id="Q86WK7"/>
<dbReference type="OMA" id="TPCRCPP"/>
<dbReference type="OrthoDB" id="1394818at2759"/>
<dbReference type="PAN-GO" id="Q86WK7">
    <property type="GO annotations" value="2 GO annotations based on evolutionary models"/>
</dbReference>
<dbReference type="PhylomeDB" id="Q86WK7"/>
<dbReference type="TreeFam" id="TF326838"/>
<dbReference type="PathwayCommons" id="Q86WK7"/>
<dbReference type="SignaLink" id="Q86WK7"/>
<dbReference type="BioGRID-ORCS" id="386724">
    <property type="hits" value="14 hits in 1083 CRISPR screens"/>
</dbReference>
<dbReference type="GenomeRNAi" id="386724"/>
<dbReference type="Pharos" id="Q86WK7">
    <property type="development level" value="Tdark"/>
</dbReference>
<dbReference type="PRO" id="PR:Q86WK7"/>
<dbReference type="Proteomes" id="UP000005640">
    <property type="component" value="Chromosome 3"/>
</dbReference>
<dbReference type="RNAct" id="Q86WK7">
    <property type="molecule type" value="protein"/>
</dbReference>
<dbReference type="Bgee" id="ENSG00000176020">
    <property type="expression patterns" value="Expressed in primordial germ cell in gonad and 90 other cell types or tissues"/>
</dbReference>
<dbReference type="GO" id="GO:0016020">
    <property type="term" value="C:membrane"/>
    <property type="evidence" value="ECO:0000318"/>
    <property type="project" value="GO_Central"/>
</dbReference>
<dbReference type="GO" id="GO:0044877">
    <property type="term" value="F:protein-containing complex binding"/>
    <property type="evidence" value="ECO:0007669"/>
    <property type="project" value="Ensembl"/>
</dbReference>
<dbReference type="GO" id="GO:0007420">
    <property type="term" value="P:brain development"/>
    <property type="evidence" value="ECO:0000318"/>
    <property type="project" value="GO_Central"/>
</dbReference>
<dbReference type="GO" id="GO:0007157">
    <property type="term" value="P:heterophilic cell-cell adhesion via plasma membrane cell adhesion molecules"/>
    <property type="evidence" value="ECO:0000250"/>
    <property type="project" value="UniProtKB"/>
</dbReference>
<dbReference type="GO" id="GO:0010977">
    <property type="term" value="P:negative regulation of neuron projection development"/>
    <property type="evidence" value="ECO:0007669"/>
    <property type="project" value="Ensembl"/>
</dbReference>
<dbReference type="GO" id="GO:0051965">
    <property type="term" value="P:positive regulation of synapse assembly"/>
    <property type="evidence" value="ECO:0000318"/>
    <property type="project" value="GO_Central"/>
</dbReference>
<dbReference type="FunFam" id="2.60.40.10:FF:001492">
    <property type="entry name" value="Adhesion molecule with Ig-like domain 3"/>
    <property type="match status" value="1"/>
</dbReference>
<dbReference type="FunFam" id="3.80.10.10:FF:000337">
    <property type="entry name" value="Adhesion molecule with Ig-like domain 3"/>
    <property type="match status" value="1"/>
</dbReference>
<dbReference type="Gene3D" id="2.60.40.10">
    <property type="entry name" value="Immunoglobulins"/>
    <property type="match status" value="1"/>
</dbReference>
<dbReference type="Gene3D" id="3.80.10.10">
    <property type="entry name" value="Ribonuclease Inhibitor"/>
    <property type="match status" value="1"/>
</dbReference>
<dbReference type="InterPro" id="IPR031283">
    <property type="entry name" value="AMIGO"/>
</dbReference>
<dbReference type="InterPro" id="IPR007110">
    <property type="entry name" value="Ig-like_dom"/>
</dbReference>
<dbReference type="InterPro" id="IPR036179">
    <property type="entry name" value="Ig-like_dom_sf"/>
</dbReference>
<dbReference type="InterPro" id="IPR013783">
    <property type="entry name" value="Ig-like_fold"/>
</dbReference>
<dbReference type="InterPro" id="IPR003599">
    <property type="entry name" value="Ig_sub"/>
</dbReference>
<dbReference type="InterPro" id="IPR003598">
    <property type="entry name" value="Ig_sub2"/>
</dbReference>
<dbReference type="InterPro" id="IPR001611">
    <property type="entry name" value="Leu-rich_rpt"/>
</dbReference>
<dbReference type="InterPro" id="IPR003591">
    <property type="entry name" value="Leu-rich_rpt_typical-subtyp"/>
</dbReference>
<dbReference type="InterPro" id="IPR032675">
    <property type="entry name" value="LRR_dom_sf"/>
</dbReference>
<dbReference type="PANTHER" id="PTHR24368">
    <property type="entry name" value="AMPHOTERIN-INDUCED PROTEIN"/>
    <property type="match status" value="1"/>
</dbReference>
<dbReference type="PANTHER" id="PTHR24368:SF62">
    <property type="entry name" value="AMPHOTERIN-INDUCED PROTEIN 3"/>
    <property type="match status" value="1"/>
</dbReference>
<dbReference type="Pfam" id="PF00560">
    <property type="entry name" value="LRR_1"/>
    <property type="match status" value="1"/>
</dbReference>
<dbReference type="Pfam" id="PF13855">
    <property type="entry name" value="LRR_8"/>
    <property type="match status" value="1"/>
</dbReference>
<dbReference type="SMART" id="SM00409">
    <property type="entry name" value="IG"/>
    <property type="match status" value="1"/>
</dbReference>
<dbReference type="SMART" id="SM00408">
    <property type="entry name" value="IGc2"/>
    <property type="match status" value="1"/>
</dbReference>
<dbReference type="SMART" id="SM00369">
    <property type="entry name" value="LRR_TYP"/>
    <property type="match status" value="6"/>
</dbReference>
<dbReference type="SUPFAM" id="SSF48726">
    <property type="entry name" value="Immunoglobulin"/>
    <property type="match status" value="1"/>
</dbReference>
<dbReference type="SUPFAM" id="SSF52058">
    <property type="entry name" value="L domain-like"/>
    <property type="match status" value="1"/>
</dbReference>
<dbReference type="PROSITE" id="PS50835">
    <property type="entry name" value="IG_LIKE"/>
    <property type="match status" value="1"/>
</dbReference>
<dbReference type="PROSITE" id="PS51450">
    <property type="entry name" value="LRR"/>
    <property type="match status" value="5"/>
</dbReference>
<evidence type="ECO:0000250" key="1"/>
<evidence type="ECO:0000250" key="2">
    <source>
        <dbReference type="UniProtKB" id="Q80ZD5"/>
    </source>
</evidence>
<evidence type="ECO:0000250" key="3">
    <source>
        <dbReference type="UniProtKB" id="Q8C2S7"/>
    </source>
</evidence>
<evidence type="ECO:0000255" key="4"/>
<evidence type="ECO:0000255" key="5">
    <source>
        <dbReference type="PROSITE-ProRule" id="PRU00114"/>
    </source>
</evidence>
<evidence type="ECO:0000256" key="6">
    <source>
        <dbReference type="SAM" id="MobiDB-lite"/>
    </source>
</evidence>
<evidence type="ECO:0000269" key="7">
    <source>
    </source>
</evidence>
<evidence type="ECO:0000305" key="8"/>
<evidence type="ECO:0000312" key="9">
    <source>
        <dbReference type="EMBL" id="AAO48944.1"/>
    </source>
</evidence>
<evidence type="ECO:0000312" key="10">
    <source>
        <dbReference type="EMBL" id="AAQ88501.1"/>
    </source>
</evidence>
<evidence type="ECO:0000312" key="11">
    <source>
        <dbReference type="EMBL" id="BAB47480.1"/>
    </source>
</evidence>
<feature type="signal peptide" evidence="4">
    <location>
        <begin position="1"/>
        <end position="19"/>
    </location>
</feature>
<feature type="chain" id="PRO_0000014513" description="Amphoterin-induced protein 3" evidence="4">
    <location>
        <begin position="20"/>
        <end position="504"/>
    </location>
</feature>
<feature type="topological domain" description="Extracellular" evidence="4">
    <location>
        <begin position="20"/>
        <end position="383"/>
    </location>
</feature>
<feature type="transmembrane region" description="Helical" evidence="4">
    <location>
        <begin position="384"/>
        <end position="404"/>
    </location>
</feature>
<feature type="topological domain" description="Cytoplasmic" evidence="4">
    <location>
        <begin position="405"/>
        <end position="504"/>
    </location>
</feature>
<feature type="domain" description="LRRNT">
    <location>
        <begin position="25"/>
        <end position="61"/>
    </location>
</feature>
<feature type="repeat" description="LRR 1">
    <location>
        <begin position="62"/>
        <end position="83"/>
    </location>
</feature>
<feature type="repeat" description="LRR 2">
    <location>
        <begin position="86"/>
        <end position="107"/>
    </location>
</feature>
<feature type="repeat" description="LRR 3">
    <location>
        <begin position="110"/>
        <end position="133"/>
    </location>
</feature>
<feature type="repeat" description="LRR 4">
    <location>
        <begin position="134"/>
        <end position="155"/>
    </location>
</feature>
<feature type="repeat" description="LRR 5">
    <location>
        <begin position="158"/>
        <end position="178"/>
    </location>
</feature>
<feature type="repeat" description="LRR 6">
    <location>
        <begin position="184"/>
        <end position="207"/>
    </location>
</feature>
<feature type="domain" description="LRRCT">
    <location>
        <begin position="219"/>
        <end position="275"/>
    </location>
</feature>
<feature type="domain" description="Ig-like C2-type" evidence="4">
    <location>
        <begin position="277"/>
        <end position="370"/>
    </location>
</feature>
<feature type="region of interest" description="Disordered" evidence="6">
    <location>
        <begin position="422"/>
        <end position="448"/>
    </location>
</feature>
<feature type="compositionally biased region" description="Polar residues" evidence="6">
    <location>
        <begin position="424"/>
        <end position="440"/>
    </location>
</feature>
<feature type="glycosylation site" description="N-linked (GlcNAc...) asparagine" evidence="4">
    <location>
        <position position="107"/>
    </location>
</feature>
<feature type="glycosylation site" description="N-linked (GlcNAc...) asparagine" evidence="4">
    <location>
        <position position="272"/>
    </location>
</feature>
<feature type="glycosylation site" description="N-linked (GlcNAc...) asparagine" evidence="4">
    <location>
        <position position="301"/>
    </location>
</feature>
<feature type="glycosylation site" description="N-linked (GlcNAc...) asparagine" evidence="4">
    <location>
        <position position="362"/>
    </location>
</feature>
<feature type="glycosylation site" description="N-linked (GlcNAc...) asparagine" evidence="4">
    <location>
        <position position="368"/>
    </location>
</feature>
<feature type="disulfide bond" evidence="5">
    <location>
        <begin position="34"/>
        <end position="40"/>
    </location>
</feature>
<feature type="disulfide bond" evidence="5">
    <location>
        <begin position="38"/>
        <end position="47"/>
    </location>
</feature>
<feature type="disulfide bond" evidence="5">
    <location>
        <begin position="223"/>
        <end position="251"/>
    </location>
</feature>
<feature type="disulfide bond" evidence="5">
    <location>
        <begin position="225"/>
        <end position="273"/>
    </location>
</feature>
<feature type="disulfide bond" evidence="5">
    <location>
        <begin position="300"/>
        <end position="352"/>
    </location>
</feature>